<protein>
    <recommendedName>
        <fullName>Phosphoprotein</fullName>
        <shortName>Protein P</shortName>
    </recommendedName>
    <alternativeName>
        <fullName>Protein M1</fullName>
    </alternativeName>
</protein>
<dbReference type="EMBL" id="EF614260">
    <property type="protein sequence ID" value="AAR03478.1"/>
    <property type="molecule type" value="mRNA"/>
</dbReference>
<dbReference type="RefSeq" id="YP_007641398.1">
    <molecule id="Q5VKP5-1"/>
    <property type="nucleotide sequence ID" value="NC_020809.1"/>
</dbReference>
<dbReference type="SMR" id="Q5VKP5"/>
<dbReference type="GeneID" id="14857932"/>
<dbReference type="KEGG" id="vg:14857932"/>
<dbReference type="OrthoDB" id="6918at10239"/>
<dbReference type="Proteomes" id="UP000008381">
    <property type="component" value="Segment"/>
</dbReference>
<dbReference type="GO" id="GO:0030430">
    <property type="term" value="C:host cell cytoplasm"/>
    <property type="evidence" value="ECO:0007669"/>
    <property type="project" value="UniProtKB-SubCell"/>
</dbReference>
<dbReference type="GO" id="GO:0042025">
    <property type="term" value="C:host cell nucleus"/>
    <property type="evidence" value="ECO:0007669"/>
    <property type="project" value="UniProtKB-SubCell"/>
</dbReference>
<dbReference type="GO" id="GO:0044423">
    <property type="term" value="C:virion component"/>
    <property type="evidence" value="ECO:0007669"/>
    <property type="project" value="UniProtKB-KW"/>
</dbReference>
<dbReference type="GO" id="GO:0003968">
    <property type="term" value="F:RNA-directed RNA polymerase activity"/>
    <property type="evidence" value="ECO:0007669"/>
    <property type="project" value="InterPro"/>
</dbReference>
<dbReference type="GO" id="GO:0052170">
    <property type="term" value="P:symbiont-mediated suppression of host innate immune response"/>
    <property type="evidence" value="ECO:0007669"/>
    <property type="project" value="UniProtKB-KW"/>
</dbReference>
<dbReference type="GO" id="GO:0039563">
    <property type="term" value="P:symbiont-mediated suppression of host JAK-STAT cascade via inhibition of STAT1 activity"/>
    <property type="evidence" value="ECO:0007669"/>
    <property type="project" value="UniProtKB-KW"/>
</dbReference>
<dbReference type="GO" id="GO:0039564">
    <property type="term" value="P:symbiont-mediated suppression of host JAK-STAT cascade via inhibition of STAT2 activity"/>
    <property type="evidence" value="ECO:0007669"/>
    <property type="project" value="UniProtKB-KW"/>
</dbReference>
<dbReference type="GO" id="GO:0039502">
    <property type="term" value="P:symbiont-mediated suppression of host type I interferon-mediated signaling pathway"/>
    <property type="evidence" value="ECO:0007669"/>
    <property type="project" value="UniProtKB-KW"/>
</dbReference>
<dbReference type="GO" id="GO:0019083">
    <property type="term" value="P:viral transcription"/>
    <property type="evidence" value="ECO:0007669"/>
    <property type="project" value="InterPro"/>
</dbReference>
<dbReference type="CDD" id="cd21032">
    <property type="entry name" value="RABV_P-protein-C_like"/>
    <property type="match status" value="1"/>
</dbReference>
<dbReference type="Gene3D" id="6.10.140.1560">
    <property type="match status" value="1"/>
</dbReference>
<dbReference type="Gene3D" id="1.20.120.820">
    <property type="entry name" value="Phosphoprotein, C-terminal domain"/>
    <property type="match status" value="1"/>
</dbReference>
<dbReference type="InterPro" id="IPR004259">
    <property type="entry name" value="PP_M1-like"/>
</dbReference>
<dbReference type="InterPro" id="IPR037199">
    <property type="entry name" value="PP_M1_C"/>
</dbReference>
<dbReference type="InterPro" id="IPR049506">
    <property type="entry name" value="RABV_P-like_C"/>
</dbReference>
<dbReference type="Pfam" id="PF03012">
    <property type="entry name" value="PP_M1"/>
    <property type="match status" value="1"/>
</dbReference>
<dbReference type="SUPFAM" id="SSF118173">
    <property type="entry name" value="Phosphoprotein M1, C-terminal domain"/>
    <property type="match status" value="1"/>
</dbReference>
<organismHost>
    <name type="scientific">Murina leucogaster</name>
    <name type="common">Greater tube-nosed bat</name>
    <dbReference type="NCBI Taxonomy" id="187017"/>
</organismHost>
<proteinExistence type="evidence at transcript level"/>
<feature type="chain" id="PRO_0000295247" description="Phosphoprotein">
    <location>
        <begin position="1"/>
        <end position="298"/>
    </location>
</feature>
<feature type="region of interest" description="Disordered" evidence="2">
    <location>
        <begin position="57"/>
        <end position="79"/>
    </location>
</feature>
<feature type="region of interest" description="Disordered" evidence="2">
    <location>
        <begin position="141"/>
        <end position="190"/>
    </location>
</feature>
<feature type="short sequence motif" description="Nuclear export signal" evidence="1">
    <location>
        <begin position="49"/>
        <end position="58"/>
    </location>
</feature>
<feature type="short sequence motif" description="Nuclear localization signal" evidence="1">
    <location>
        <begin position="212"/>
        <end position="215"/>
    </location>
</feature>
<feature type="compositionally biased region" description="Polar residues" evidence="2">
    <location>
        <begin position="144"/>
        <end position="174"/>
    </location>
</feature>
<feature type="modified residue" description="Phosphoserine; by host PKC" evidence="1">
    <location>
        <position position="211"/>
    </location>
</feature>
<feature type="modified residue" description="Phosphoserine; by host PKC" evidence="1">
    <location>
        <position position="272"/>
    </location>
</feature>
<feature type="splice variant" id="VSP_026890" description="In isoform P5." evidence="3">
    <location>
        <begin position="1"/>
        <end position="82"/>
    </location>
</feature>
<feature type="splice variant" id="VSP_026891" description="In isoform P3." evidence="3">
    <location>
        <begin position="1"/>
        <end position="52"/>
    </location>
</feature>
<feature type="splice variant" id="VSP_026892" description="In isoform P2." evidence="3">
    <location>
        <begin position="1"/>
        <end position="19"/>
    </location>
</feature>
<accession>Q5VKP5</accession>
<name>PHOSP_IRKV</name>
<evidence type="ECO:0000250" key="1"/>
<evidence type="ECO:0000256" key="2">
    <source>
        <dbReference type="SAM" id="MobiDB-lite"/>
    </source>
</evidence>
<evidence type="ECO:0000305" key="3"/>
<sequence>MSKIFVNPSAIRAGLADLEMAEETIDLINRTIEDNQAHLQGVPIEVEALPEDMKKLQISDHQQGQPSGGATGQDGSEEEDFYMTESENPYIPFQSYLDAVGIQLVRKMKTGEGFLKIWSQAAEEIVSYVAINFPLPADKESAEKSTQTVGEPLKSNSASNTPNKRSKPSTSTDLKAQEASGPHGIDWAASNDEDDASVEAEIAHQIAESFSKKYKFPSRSSGIFLWNFEQLKMNLDDIVGGAKEIPGVIRMAKEGNKLPLRCILGGVALTHSKRFQVLVNSEKLGRIMQEDLNKYLAN</sequence>
<gene>
    <name type="primary">P</name>
</gene>
<organism>
    <name type="scientific">Irkut virus</name>
    <name type="common">IRKV</name>
    <dbReference type="NCBI Taxonomy" id="249583"/>
    <lineage>
        <taxon>Viruses</taxon>
        <taxon>Riboviria</taxon>
        <taxon>Orthornavirae</taxon>
        <taxon>Negarnaviricota</taxon>
        <taxon>Haploviricotina</taxon>
        <taxon>Monjiviricetes</taxon>
        <taxon>Mononegavirales</taxon>
        <taxon>Rhabdoviridae</taxon>
        <taxon>Alpharhabdovirinae</taxon>
        <taxon>Lyssavirus</taxon>
    </lineage>
</organism>
<reference key="1">
    <citation type="journal article" date="2005" name="Virus Res.">
        <title>Phylogenetic relationships of Irkut and West Caucasian bat viruses within the Lyssavirus genus and suggested quantitative criteria based on the N gene sequence for lyssavirus genotype definition.</title>
        <authorList>
            <person name="Kuzmin I.V."/>
            <person name="Hughes G.J."/>
            <person name="Botvinkin A.D."/>
            <person name="Orciari L.A."/>
            <person name="Rupprecht C.E."/>
        </authorList>
    </citation>
    <scope>NUCLEOTIDE SEQUENCE [MRNA]</scope>
</reference>
<reference key="2">
    <citation type="journal article" date="2008" name="Virus Res.">
        <title>Complete genomes of Aravan, Khujand, Irkut and West Caucasian bat viruses, with special attention to the polymerase gene and non-coding regions.</title>
        <authorList>
            <person name="Kuzmin I.V."/>
            <person name="Wu X."/>
            <person name="Tordo N."/>
            <person name="Rupprecht C.E."/>
        </authorList>
    </citation>
    <scope>NUCLEOTIDE SEQUENCE [GENOMIC RNA]</scope>
</reference>
<keyword id="KW-0024">Alternative initiation</keyword>
<keyword id="KW-0143">Chaperone</keyword>
<keyword id="KW-1035">Host cytoplasm</keyword>
<keyword id="KW-1048">Host nucleus</keyword>
<keyword id="KW-0945">Host-virus interaction</keyword>
<keyword id="KW-1090">Inhibition of host innate immune response by virus</keyword>
<keyword id="KW-1114">Inhibition of host interferon signaling pathway by virus</keyword>
<keyword id="KW-1105">Inhibition of host STAT1 by virus</keyword>
<keyword id="KW-1106">Inhibition of host STAT2 by virus</keyword>
<keyword id="KW-0922">Interferon antiviral system evasion</keyword>
<keyword id="KW-0597">Phosphoprotein</keyword>
<keyword id="KW-0899">Viral immunoevasion</keyword>
<keyword id="KW-0693">Viral RNA replication</keyword>
<keyword id="KW-0946">Virion</keyword>
<comment type="function">
    <text evidence="1">Non catalytic polymerase cofactor and regulatory protein that plays a role in viral transcription and replication. Stabilizes the RNA polymerase L to the N-RNA template and binds the soluble protein N, preventing it from encapsidating non-genomic RNA. Also inhibits host IFN-alpha and IFN-beta signaling by binding and retaining phosphorylated STAT1 in the cytoplasm or by inhibiting the DNA binding of STAT1 in the nucleus (By similarity).</text>
</comment>
<comment type="subunit">
    <text evidence="1">Homotrimer when phosphorylated. This trimer is stabilized by binding to the L protein. Binds soluble protein N, and ribonucleocapsid. Interacts with host STAT1, STAT2 and PML (By similarity).</text>
</comment>
<comment type="subcellular location">
    <molecule>Phosphoprotein</molecule>
    <subcellularLocation>
        <location>Virion</location>
    </subcellularLocation>
    <subcellularLocation>
        <location evidence="1">Host cytoplasm</location>
    </subcellularLocation>
</comment>
<comment type="subcellular location">
    <molecule>Isoform P2</molecule>
    <subcellularLocation>
        <location evidence="1">Host cytoplasm</location>
    </subcellularLocation>
</comment>
<comment type="subcellular location">
    <molecule>Isoform P3</molecule>
    <subcellularLocation>
        <location evidence="1">Host nucleus</location>
    </subcellularLocation>
</comment>
<comment type="subcellular location">
    <molecule>Isoform P5</molecule>
    <subcellularLocation>
        <location evidence="1">Host nucleus</location>
    </subcellularLocation>
</comment>
<comment type="alternative products">
    <event type="alternative initiation"/>
    <isoform>
        <id>Q5VKP5-1</id>
        <name>P</name>
        <sequence type="displayed"/>
    </isoform>
    <isoform>
        <id>Q5VKP5-2</id>
        <name>P2</name>
        <sequence type="described" ref="VSP_026892"/>
    </isoform>
    <isoform>
        <id>Q5VKP5-3</id>
        <name>P3</name>
        <sequence type="described" ref="VSP_026891"/>
    </isoform>
    <isoform>
        <id>Q5VKP5-4</id>
        <name>P5</name>
        <sequence type="described" ref="VSP_026890"/>
    </isoform>
</comment>
<comment type="PTM">
    <text evidence="1">Phosphorylated by host PKC and by an unknown kinase.</text>
</comment>
<comment type="similarity">
    <text evidence="3">Belongs to the lyssavirus protein P family.</text>
</comment>